<gene>
    <name type="primary">cfxQ</name>
</gene>
<dbReference type="EMBL" id="AF041468">
    <property type="protein sequence ID" value="AAC35641.1"/>
    <property type="molecule type" value="Genomic_DNA"/>
</dbReference>
<dbReference type="SMR" id="O78450"/>
<dbReference type="HOGENOM" id="CLU_008749_1_0_1"/>
<dbReference type="OMA" id="KQALHMM"/>
<dbReference type="GO" id="GO:0009507">
    <property type="term" value="C:chloroplast"/>
    <property type="evidence" value="ECO:0007669"/>
    <property type="project" value="UniProtKB-SubCell"/>
</dbReference>
<dbReference type="GO" id="GO:0005524">
    <property type="term" value="F:ATP binding"/>
    <property type="evidence" value="ECO:0007669"/>
    <property type="project" value="UniProtKB-KW"/>
</dbReference>
<dbReference type="GO" id="GO:0016887">
    <property type="term" value="F:ATP hydrolysis activity"/>
    <property type="evidence" value="ECO:0007669"/>
    <property type="project" value="InterPro"/>
</dbReference>
<dbReference type="CDD" id="cd00009">
    <property type="entry name" value="AAA"/>
    <property type="match status" value="1"/>
</dbReference>
<dbReference type="FunFam" id="3.40.50.300:FF:000216">
    <property type="entry name" value="Type VII secretion ATPase EccA"/>
    <property type="match status" value="1"/>
</dbReference>
<dbReference type="Gene3D" id="1.10.8.60">
    <property type="match status" value="1"/>
</dbReference>
<dbReference type="Gene3D" id="3.40.50.300">
    <property type="entry name" value="P-loop containing nucleotide triphosphate hydrolases"/>
    <property type="match status" value="1"/>
</dbReference>
<dbReference type="InterPro" id="IPR003593">
    <property type="entry name" value="AAA+_ATPase"/>
</dbReference>
<dbReference type="InterPro" id="IPR041627">
    <property type="entry name" value="AAA_lid_6"/>
</dbReference>
<dbReference type="InterPro" id="IPR003959">
    <property type="entry name" value="ATPase_AAA_core"/>
</dbReference>
<dbReference type="InterPro" id="IPR000470">
    <property type="entry name" value="CbxX/CfqX_mono"/>
</dbReference>
<dbReference type="InterPro" id="IPR000641">
    <property type="entry name" value="CbxX/CfxQ"/>
</dbReference>
<dbReference type="InterPro" id="IPR050773">
    <property type="entry name" value="CbxX/CfxQ_RuBisCO_ESX"/>
</dbReference>
<dbReference type="InterPro" id="IPR027417">
    <property type="entry name" value="P-loop_NTPase"/>
</dbReference>
<dbReference type="NCBIfam" id="TIGR02880">
    <property type="entry name" value="cbbX_cfxQ"/>
    <property type="match status" value="1"/>
</dbReference>
<dbReference type="PANTHER" id="PTHR43392">
    <property type="entry name" value="AAA-TYPE ATPASE FAMILY PROTEIN / ANKYRIN REPEAT FAMILY PROTEIN"/>
    <property type="match status" value="1"/>
</dbReference>
<dbReference type="PANTHER" id="PTHR43392:SF2">
    <property type="entry name" value="AAA-TYPE ATPASE FAMILY PROTEIN _ ANKYRIN REPEAT FAMILY PROTEIN"/>
    <property type="match status" value="1"/>
</dbReference>
<dbReference type="Pfam" id="PF00004">
    <property type="entry name" value="AAA"/>
    <property type="match status" value="1"/>
</dbReference>
<dbReference type="Pfam" id="PF17866">
    <property type="entry name" value="AAA_lid_6"/>
    <property type="match status" value="1"/>
</dbReference>
<dbReference type="PRINTS" id="PR00819">
    <property type="entry name" value="CBXCFQXSUPER"/>
</dbReference>
<dbReference type="PRINTS" id="PR00820">
    <property type="entry name" value="CBXXCFQX"/>
</dbReference>
<dbReference type="SMART" id="SM00382">
    <property type="entry name" value="AAA"/>
    <property type="match status" value="1"/>
</dbReference>
<dbReference type="SUPFAM" id="SSF52540">
    <property type="entry name" value="P-loop containing nucleoside triphosphate hydrolases"/>
    <property type="match status" value="1"/>
</dbReference>
<sequence length="293" mass="33560">MSISNETTVNLQEEYEKRQIQEVLDELDRDLVGLIPVKTRIKEIAALLLVHRLRKLLGLTSANPGLHMSFTGSPGTGKTTVALKMADILFRLGYVRKGHLITVTRDDLVGQYIGHTAPKTKEVLKRAMGGVLFIDEAYYLYKPDNERDYGAEAIEILLQVMENQRDDLVIIFAGYKDRMDSFYESNPGLSSRVANHIDFPDYTPEELLIIGKIMLEEQQYRLTKESELVLLDYIKLRMKEPHFANARSVRNAIDRARMRQANRMFNAGDKVLTKSDLVTIQPEDLLKSRLFKK</sequence>
<accession>O78450</accession>
<evidence type="ECO:0000250" key="1"/>
<evidence type="ECO:0000255" key="2"/>
<evidence type="ECO:0000305" key="3"/>
<name>CFXQ_GUITH</name>
<protein>
    <recommendedName>
        <fullName>Protein CfxQ homolog</fullName>
    </recommendedName>
</protein>
<keyword id="KW-0067">ATP-binding</keyword>
<keyword id="KW-0150">Chloroplast</keyword>
<keyword id="KW-0547">Nucleotide-binding</keyword>
<keyword id="KW-0934">Plastid</keyword>
<geneLocation type="chloroplast"/>
<reference key="1">
    <citation type="journal article" date="1999" name="J. Mol. Evol.">
        <title>The plastid genome of the cryptophyte alga, Guillardia theta: complete sequence and conserved synteny groups confirm its common ancestry with red algae.</title>
        <authorList>
            <person name="Douglas S.E."/>
            <person name="Penny S.L."/>
        </authorList>
    </citation>
    <scope>NUCLEOTIDE SEQUENCE [LARGE SCALE GENOMIC DNA]</scope>
</reference>
<proteinExistence type="inferred from homology"/>
<comment type="function">
    <text evidence="1">Necessary for the expression of RuBisCO.</text>
</comment>
<comment type="subcellular location">
    <subcellularLocation>
        <location>Plastid</location>
        <location>Chloroplast</location>
    </subcellularLocation>
</comment>
<comment type="similarity">
    <text evidence="3">Belongs to the CbxX/CfxQ family.</text>
</comment>
<organism>
    <name type="scientific">Guillardia theta</name>
    <name type="common">Cryptophyte</name>
    <name type="synonym">Cryptomonas phi</name>
    <dbReference type="NCBI Taxonomy" id="55529"/>
    <lineage>
        <taxon>Eukaryota</taxon>
        <taxon>Cryptophyceae</taxon>
        <taxon>Pyrenomonadales</taxon>
        <taxon>Geminigeraceae</taxon>
        <taxon>Guillardia</taxon>
    </lineage>
</organism>
<feature type="chain" id="PRO_0000063040" description="Protein CfxQ homolog">
    <location>
        <begin position="1"/>
        <end position="293"/>
    </location>
</feature>
<feature type="binding site" evidence="2">
    <location>
        <begin position="72"/>
        <end position="79"/>
    </location>
    <ligand>
        <name>ATP</name>
        <dbReference type="ChEBI" id="CHEBI:30616"/>
    </ligand>
</feature>